<protein>
    <recommendedName>
        <fullName>Hereditary hemochromatosis protein homolog</fullName>
    </recommendedName>
</protein>
<comment type="function">
    <text evidence="1">Binds to transferrin receptor (TFR) and reduces its affinity for iron-loaded transferrin.</text>
</comment>
<comment type="subunit">
    <text evidence="1">Binds TFR through the extracellular domain in a pH-dependent manner.</text>
</comment>
<comment type="subcellular location">
    <subcellularLocation>
        <location evidence="1">Cell membrane</location>
        <topology evidence="1">Single-pass type I membrane protein</topology>
    </subcellularLocation>
</comment>
<comment type="similarity">
    <text evidence="4">Belongs to the MHC class I family.</text>
</comment>
<feature type="signal peptide" evidence="2">
    <location>
        <begin position="1"/>
        <end position="24"/>
    </location>
</feature>
<feature type="chain" id="PRO_0000018894" description="Hereditary hemochromatosis protein homolog">
    <location>
        <begin position="25"/>
        <end position="359"/>
    </location>
</feature>
<feature type="topological domain" description="Extracellular" evidence="1">
    <location>
        <begin position="25"/>
        <end position="318"/>
    </location>
</feature>
<feature type="transmembrane region" description="Helical" evidence="2">
    <location>
        <begin position="319"/>
        <end position="339"/>
    </location>
</feature>
<feature type="topological domain" description="Cytoplasmic" evidence="1">
    <location>
        <begin position="340"/>
        <end position="359"/>
    </location>
</feature>
<feature type="domain" description="Ig-like C1-type">
    <location>
        <begin position="219"/>
        <end position="308"/>
    </location>
</feature>
<feature type="region of interest" description="Alpha-1">
    <location>
        <begin position="25"/>
        <end position="126"/>
    </location>
</feature>
<feature type="region of interest" description="Alpha-2">
    <location>
        <begin position="127"/>
        <end position="217"/>
    </location>
</feature>
<feature type="region of interest" description="Alpha-3">
    <location>
        <begin position="218"/>
        <end position="309"/>
    </location>
</feature>
<feature type="region of interest" description="Connecting peptide">
    <location>
        <begin position="310"/>
        <end position="318"/>
    </location>
</feature>
<feature type="glycosylation site" description="N-linked (GlcNAc...) asparagine" evidence="2">
    <location>
        <position position="114"/>
    </location>
</feature>
<feature type="glycosylation site" description="N-linked (GlcNAc...) asparagine" evidence="2">
    <location>
        <position position="142"/>
    </location>
</feature>
<feature type="glycosylation site" description="N-linked (GlcNAc...) asparagine" evidence="2">
    <location>
        <position position="166"/>
    </location>
</feature>
<feature type="glycosylation site" description="N-linked (GlcNAc...) asparagine" evidence="2">
    <location>
        <position position="246"/>
    </location>
</feature>
<feature type="disulfide bond" evidence="3">
    <location>
        <begin position="136"/>
        <end position="199"/>
    </location>
</feature>
<feature type="disulfide bond" evidence="3">
    <location>
        <begin position="237"/>
        <end position="294"/>
    </location>
</feature>
<feature type="sequence conflict" description="In Ref. 1; AAC03447, 2; AAB07525, 6; AAI16745/AAI16747 and 8; CAA73197." evidence="4" ref="1 2 6 8">
    <original>V</original>
    <variation>I</variation>
    <location>
        <position position="327"/>
    </location>
</feature>
<organism>
    <name type="scientific">Mus musculus</name>
    <name type="common">Mouse</name>
    <dbReference type="NCBI Taxonomy" id="10090"/>
    <lineage>
        <taxon>Eukaryota</taxon>
        <taxon>Metazoa</taxon>
        <taxon>Chordata</taxon>
        <taxon>Craniata</taxon>
        <taxon>Vertebrata</taxon>
        <taxon>Euteleostomi</taxon>
        <taxon>Mammalia</taxon>
        <taxon>Eutheria</taxon>
        <taxon>Euarchontoglires</taxon>
        <taxon>Glires</taxon>
        <taxon>Rodentia</taxon>
        <taxon>Myomorpha</taxon>
        <taxon>Muroidea</taxon>
        <taxon>Muridae</taxon>
        <taxon>Murinae</taxon>
        <taxon>Mus</taxon>
        <taxon>Mus</taxon>
    </lineage>
</organism>
<keyword id="KW-1003">Cell membrane</keyword>
<keyword id="KW-1015">Disulfide bond</keyword>
<keyword id="KW-0325">Glycoprotein</keyword>
<keyword id="KW-0406">Ion transport</keyword>
<keyword id="KW-0408">Iron</keyword>
<keyword id="KW-0410">Iron transport</keyword>
<keyword id="KW-0472">Membrane</keyword>
<keyword id="KW-1185">Reference proteome</keyword>
<keyword id="KW-0732">Signal</keyword>
<keyword id="KW-0812">Transmembrane</keyword>
<keyword id="KW-1133">Transmembrane helix</keyword>
<keyword id="KW-0813">Transport</keyword>
<dbReference type="EMBL" id="AF007558">
    <property type="protein sequence ID" value="AAC03447.1"/>
    <property type="molecule type" value="Genomic_DNA"/>
</dbReference>
<dbReference type="EMBL" id="U66849">
    <property type="protein sequence ID" value="AAB07525.1"/>
    <property type="molecule type" value="mRNA"/>
</dbReference>
<dbReference type="EMBL" id="AK009581">
    <property type="protein sequence ID" value="BAB26373.1"/>
    <property type="molecule type" value="mRNA"/>
</dbReference>
<dbReference type="EMBL" id="AK150697">
    <property type="protein sequence ID" value="BAE29776.1"/>
    <property type="molecule type" value="mRNA"/>
</dbReference>
<dbReference type="EMBL" id="AL590388">
    <property type="status" value="NOT_ANNOTATED_CDS"/>
    <property type="molecule type" value="Genomic_DNA"/>
</dbReference>
<dbReference type="EMBL" id="CH466561">
    <property type="protein sequence ID" value="EDL32544.1"/>
    <property type="molecule type" value="Genomic_DNA"/>
</dbReference>
<dbReference type="EMBL" id="BC116744">
    <property type="protein sequence ID" value="AAI16745.1"/>
    <property type="molecule type" value="mRNA"/>
</dbReference>
<dbReference type="EMBL" id="BC116746">
    <property type="protein sequence ID" value="AAI16747.1"/>
    <property type="molecule type" value="mRNA"/>
</dbReference>
<dbReference type="EMBL" id="Y12650">
    <property type="protein sequence ID" value="CAA73197.1"/>
    <property type="molecule type" value="Genomic_DNA"/>
</dbReference>
<dbReference type="EMBL" id="U80604">
    <property type="protein sequence ID" value="AAB51504.1"/>
    <property type="molecule type" value="Genomic_DNA"/>
</dbReference>
<dbReference type="CCDS" id="CCDS26360.1"/>
<dbReference type="PIR" id="JC5382">
    <property type="entry name" value="JC5382"/>
</dbReference>
<dbReference type="RefSeq" id="NP_001334422.1">
    <property type="nucleotide sequence ID" value="NM_001347493.1"/>
</dbReference>
<dbReference type="RefSeq" id="NP_034554.2">
    <property type="nucleotide sequence ID" value="NM_010424.5"/>
</dbReference>
<dbReference type="SMR" id="P70387"/>
<dbReference type="BioGRID" id="200285">
    <property type="interactions" value="1"/>
</dbReference>
<dbReference type="FunCoup" id="P70387">
    <property type="interactions" value="183"/>
</dbReference>
<dbReference type="STRING" id="10090.ENSMUSP00000089298"/>
<dbReference type="GlyCosmos" id="P70387">
    <property type="glycosylation" value="4 sites, No reported glycans"/>
</dbReference>
<dbReference type="GlyGen" id="P70387">
    <property type="glycosylation" value="4 sites, 1 N-linked glycan (1 site)"/>
</dbReference>
<dbReference type="iPTMnet" id="P70387"/>
<dbReference type="PhosphoSitePlus" id="P70387"/>
<dbReference type="PaxDb" id="10090-ENSMUSP00000089298"/>
<dbReference type="PeptideAtlas" id="P70387"/>
<dbReference type="ProteomicsDB" id="269661"/>
<dbReference type="Antibodypedia" id="2221">
    <property type="antibodies" value="344 antibodies from 32 providers"/>
</dbReference>
<dbReference type="DNASU" id="15216"/>
<dbReference type="Ensembl" id="ENSMUST00000091706.14">
    <property type="protein sequence ID" value="ENSMUSP00000089298.7"/>
    <property type="gene ID" value="ENSMUSG00000006611.16"/>
</dbReference>
<dbReference type="GeneID" id="15216"/>
<dbReference type="KEGG" id="mmu:15216"/>
<dbReference type="UCSC" id="uc007pup.1">
    <property type="organism name" value="mouse"/>
</dbReference>
<dbReference type="AGR" id="MGI:109191"/>
<dbReference type="CTD" id="3077"/>
<dbReference type="MGI" id="MGI:109191">
    <property type="gene designation" value="Hfe"/>
</dbReference>
<dbReference type="VEuPathDB" id="HostDB:ENSMUSG00000006611"/>
<dbReference type="eggNOG" id="KOG1745">
    <property type="taxonomic scope" value="Eukaryota"/>
</dbReference>
<dbReference type="GeneTree" id="ENSGT01130000278293"/>
<dbReference type="HOGENOM" id="CLU_047501_0_2_1"/>
<dbReference type="InParanoid" id="P70387"/>
<dbReference type="OMA" id="KGWEHMF"/>
<dbReference type="OrthoDB" id="10043043at2759"/>
<dbReference type="PhylomeDB" id="P70387"/>
<dbReference type="TreeFam" id="TF336617"/>
<dbReference type="Reactome" id="R-MMU-917977">
    <property type="pathway name" value="Transferrin endocytosis and recycling"/>
</dbReference>
<dbReference type="BioGRID-ORCS" id="15216">
    <property type="hits" value="2 hits in 83 CRISPR screens"/>
</dbReference>
<dbReference type="PRO" id="PR:P70387"/>
<dbReference type="Proteomes" id="UP000000589">
    <property type="component" value="Chromosome 13"/>
</dbReference>
<dbReference type="RNAct" id="P70387">
    <property type="molecule type" value="protein"/>
</dbReference>
<dbReference type="Bgee" id="ENSMUSG00000006611">
    <property type="expression patterns" value="Expressed in choroid plexus epithelium and 181 other cell types or tissues"/>
</dbReference>
<dbReference type="ExpressionAtlas" id="P70387">
    <property type="expression patterns" value="baseline and differential"/>
</dbReference>
<dbReference type="GO" id="GO:0045177">
    <property type="term" value="C:apical part of cell"/>
    <property type="evidence" value="ECO:0007669"/>
    <property type="project" value="Ensembl"/>
</dbReference>
<dbReference type="GO" id="GO:0045178">
    <property type="term" value="C:basal part of cell"/>
    <property type="evidence" value="ECO:0007669"/>
    <property type="project" value="Ensembl"/>
</dbReference>
<dbReference type="GO" id="GO:0005769">
    <property type="term" value="C:early endosome"/>
    <property type="evidence" value="ECO:0007669"/>
    <property type="project" value="Ensembl"/>
</dbReference>
<dbReference type="GO" id="GO:0009897">
    <property type="term" value="C:external side of plasma membrane"/>
    <property type="evidence" value="ECO:0007669"/>
    <property type="project" value="Ensembl"/>
</dbReference>
<dbReference type="GO" id="GO:0005615">
    <property type="term" value="C:extracellular space"/>
    <property type="evidence" value="ECO:0007669"/>
    <property type="project" value="Ensembl"/>
</dbReference>
<dbReference type="GO" id="GO:1990712">
    <property type="term" value="C:HFE-transferrin receptor complex"/>
    <property type="evidence" value="ECO:0000314"/>
    <property type="project" value="BHF-UCL"/>
</dbReference>
<dbReference type="GO" id="GO:0005654">
    <property type="term" value="C:nucleoplasm"/>
    <property type="evidence" value="ECO:0007669"/>
    <property type="project" value="Ensembl"/>
</dbReference>
<dbReference type="GO" id="GO:0048471">
    <property type="term" value="C:perinuclear region of cytoplasm"/>
    <property type="evidence" value="ECO:0007669"/>
    <property type="project" value="Ensembl"/>
</dbReference>
<dbReference type="GO" id="GO:0055037">
    <property type="term" value="C:recycling endosome"/>
    <property type="evidence" value="ECO:0007669"/>
    <property type="project" value="Ensembl"/>
</dbReference>
<dbReference type="GO" id="GO:0030881">
    <property type="term" value="F:beta-2-microglobulin binding"/>
    <property type="evidence" value="ECO:0007669"/>
    <property type="project" value="Ensembl"/>
</dbReference>
<dbReference type="GO" id="GO:0039706">
    <property type="term" value="F:co-receptor binding"/>
    <property type="evidence" value="ECO:0007669"/>
    <property type="project" value="Ensembl"/>
</dbReference>
<dbReference type="GO" id="GO:1990459">
    <property type="term" value="F:transferrin receptor binding"/>
    <property type="evidence" value="ECO:0000353"/>
    <property type="project" value="BHF-UCL"/>
</dbReference>
<dbReference type="GO" id="GO:0030509">
    <property type="term" value="P:BMP signaling pathway"/>
    <property type="evidence" value="ECO:0007669"/>
    <property type="project" value="Ensembl"/>
</dbReference>
<dbReference type="GO" id="GO:0071281">
    <property type="term" value="P:cellular response to iron ion"/>
    <property type="evidence" value="ECO:0007669"/>
    <property type="project" value="Ensembl"/>
</dbReference>
<dbReference type="GO" id="GO:0042446">
    <property type="term" value="P:hormone biosynthetic process"/>
    <property type="evidence" value="ECO:0000315"/>
    <property type="project" value="MGI"/>
</dbReference>
<dbReference type="GO" id="GO:0006879">
    <property type="term" value="P:intracellular iron ion homeostasis"/>
    <property type="evidence" value="ECO:0007669"/>
    <property type="project" value="Ensembl"/>
</dbReference>
<dbReference type="GO" id="GO:0006826">
    <property type="term" value="P:iron ion transport"/>
    <property type="evidence" value="ECO:0007669"/>
    <property type="project" value="UniProtKB-KW"/>
</dbReference>
<dbReference type="GO" id="GO:0060586">
    <property type="term" value="P:multicellular organismal-level iron ion homeostasis"/>
    <property type="evidence" value="ECO:0000315"/>
    <property type="project" value="MGI"/>
</dbReference>
<dbReference type="GO" id="GO:1904283">
    <property type="term" value="P:negative regulation of antigen processing and presentation of endogenous peptide antigen via MHC class I"/>
    <property type="evidence" value="ECO:0007669"/>
    <property type="project" value="Ensembl"/>
</dbReference>
<dbReference type="GO" id="GO:2001186">
    <property type="term" value="P:negative regulation of CD8-positive, alpha-beta T cell activation"/>
    <property type="evidence" value="ECO:0007669"/>
    <property type="project" value="Ensembl"/>
</dbReference>
<dbReference type="GO" id="GO:0032435">
    <property type="term" value="P:negative regulation of proteasomal ubiquitin-dependent protein catabolic process"/>
    <property type="evidence" value="ECO:0000315"/>
    <property type="project" value="BHF-UCL"/>
</dbReference>
<dbReference type="GO" id="GO:0002725">
    <property type="term" value="P:negative regulation of T cell cytokine production"/>
    <property type="evidence" value="ECO:0007669"/>
    <property type="project" value="Ensembl"/>
</dbReference>
<dbReference type="GO" id="GO:0010628">
    <property type="term" value="P:positive regulation of gene expression"/>
    <property type="evidence" value="ECO:0000315"/>
    <property type="project" value="BHF-UCL"/>
</dbReference>
<dbReference type="GO" id="GO:0090277">
    <property type="term" value="P:positive regulation of peptide hormone secretion"/>
    <property type="evidence" value="ECO:0007669"/>
    <property type="project" value="Ensembl"/>
</dbReference>
<dbReference type="GO" id="GO:0048260">
    <property type="term" value="P:positive regulation of receptor-mediated endocytosis"/>
    <property type="evidence" value="ECO:0007669"/>
    <property type="project" value="Ensembl"/>
</dbReference>
<dbReference type="GO" id="GO:0060391">
    <property type="term" value="P:positive regulation of SMAD protein signal transduction"/>
    <property type="evidence" value="ECO:0007669"/>
    <property type="project" value="Ensembl"/>
</dbReference>
<dbReference type="GO" id="GO:0034756">
    <property type="term" value="P:regulation of iron ion transport"/>
    <property type="evidence" value="ECO:0007669"/>
    <property type="project" value="Ensembl"/>
</dbReference>
<dbReference type="GO" id="GO:2000008">
    <property type="term" value="P:regulation of protein localization to cell surface"/>
    <property type="evidence" value="ECO:0007669"/>
    <property type="project" value="Ensembl"/>
</dbReference>
<dbReference type="FunFam" id="3.30.500.10:FF:000001">
    <property type="entry name" value="H-2 class I histocompatibility antigen, alpha chain"/>
    <property type="match status" value="1"/>
</dbReference>
<dbReference type="FunFam" id="2.60.40.10:FF:000204">
    <property type="entry name" value="Major histocompatibility complex, class I-related protein"/>
    <property type="match status" value="1"/>
</dbReference>
<dbReference type="Gene3D" id="2.60.40.10">
    <property type="entry name" value="Immunoglobulins"/>
    <property type="match status" value="1"/>
</dbReference>
<dbReference type="Gene3D" id="3.30.500.10">
    <property type="entry name" value="MHC class I-like antigen recognition-like"/>
    <property type="match status" value="1"/>
</dbReference>
<dbReference type="InterPro" id="IPR007110">
    <property type="entry name" value="Ig-like_dom"/>
</dbReference>
<dbReference type="InterPro" id="IPR036179">
    <property type="entry name" value="Ig-like_dom_sf"/>
</dbReference>
<dbReference type="InterPro" id="IPR013783">
    <property type="entry name" value="Ig-like_fold"/>
</dbReference>
<dbReference type="InterPro" id="IPR003006">
    <property type="entry name" value="Ig/MHC_CS"/>
</dbReference>
<dbReference type="InterPro" id="IPR003597">
    <property type="entry name" value="Ig_C1-set"/>
</dbReference>
<dbReference type="InterPro" id="IPR050208">
    <property type="entry name" value="MHC_class-I_related"/>
</dbReference>
<dbReference type="InterPro" id="IPR011161">
    <property type="entry name" value="MHC_I-like_Ag-recog"/>
</dbReference>
<dbReference type="InterPro" id="IPR037055">
    <property type="entry name" value="MHC_I-like_Ag-recog_sf"/>
</dbReference>
<dbReference type="InterPro" id="IPR011162">
    <property type="entry name" value="MHC_I/II-like_Ag-recog"/>
</dbReference>
<dbReference type="InterPro" id="IPR001039">
    <property type="entry name" value="MHC_I_a_a1/a2"/>
</dbReference>
<dbReference type="PANTHER" id="PTHR16675:SF172">
    <property type="entry name" value="HEREDITARY HEMOCHROMATOSIS PROTEIN"/>
    <property type="match status" value="1"/>
</dbReference>
<dbReference type="PANTHER" id="PTHR16675">
    <property type="entry name" value="MHC CLASS I-RELATED"/>
    <property type="match status" value="1"/>
</dbReference>
<dbReference type="Pfam" id="PF07654">
    <property type="entry name" value="C1-set"/>
    <property type="match status" value="1"/>
</dbReference>
<dbReference type="Pfam" id="PF00129">
    <property type="entry name" value="MHC_I"/>
    <property type="match status" value="1"/>
</dbReference>
<dbReference type="PRINTS" id="PR01638">
    <property type="entry name" value="MHCCLASSI"/>
</dbReference>
<dbReference type="SMART" id="SM00407">
    <property type="entry name" value="IGc1"/>
    <property type="match status" value="1"/>
</dbReference>
<dbReference type="SUPFAM" id="SSF48726">
    <property type="entry name" value="Immunoglobulin"/>
    <property type="match status" value="1"/>
</dbReference>
<dbReference type="SUPFAM" id="SSF54452">
    <property type="entry name" value="MHC antigen-recognition domain"/>
    <property type="match status" value="1"/>
</dbReference>
<dbReference type="PROSITE" id="PS50835">
    <property type="entry name" value="IG_LIKE"/>
    <property type="match status" value="1"/>
</dbReference>
<dbReference type="PROSITE" id="PS00290">
    <property type="entry name" value="IG_MHC"/>
    <property type="match status" value="1"/>
</dbReference>
<accession>P70387</accession>
<accession>Q14AQ5</accession>
<accession>Q5SZ90</accession>
<accession>Q9D754</accession>
<evidence type="ECO:0000250" key="1">
    <source>
        <dbReference type="UniProtKB" id="Q30201"/>
    </source>
</evidence>
<evidence type="ECO:0000255" key="2"/>
<evidence type="ECO:0000255" key="3">
    <source>
        <dbReference type="PROSITE-ProRule" id="PRU00114"/>
    </source>
</evidence>
<evidence type="ECO:0000305" key="4"/>
<name>HFE_MOUSE</name>
<gene>
    <name type="primary">Hfe</name>
    <name type="synonym">Mr2</name>
</gene>
<reference key="1">
    <citation type="journal article" date="1998" name="Immunogenetics">
        <title>The mouse HFE gene.</title>
        <authorList>
            <person name="Riegert P."/>
            <person name="Gilfillan S."/>
            <person name="Nanda I."/>
            <person name="Schmid M."/>
            <person name="Bahram S."/>
        </authorList>
    </citation>
    <scope>NUCLEOTIDE SEQUENCE [GENOMIC DNA]</scope>
    <source>
        <strain>129/SvJ</strain>
    </source>
</reference>
<reference key="2">
    <citation type="submission" date="1996-09" db="EMBL/GenBank/DDBJ databases">
        <authorList>
            <person name="Hashimoto K."/>
        </authorList>
    </citation>
    <scope>NUCLEOTIDE SEQUENCE [MRNA]</scope>
    <source>
        <strain>BALB/cJ</strain>
        <tissue>Lung</tissue>
    </source>
</reference>
<reference key="3">
    <citation type="journal article" date="2005" name="Science">
        <title>The transcriptional landscape of the mammalian genome.</title>
        <authorList>
            <person name="Carninci P."/>
            <person name="Kasukawa T."/>
            <person name="Katayama S."/>
            <person name="Gough J."/>
            <person name="Frith M.C."/>
            <person name="Maeda N."/>
            <person name="Oyama R."/>
            <person name="Ravasi T."/>
            <person name="Lenhard B."/>
            <person name="Wells C."/>
            <person name="Kodzius R."/>
            <person name="Shimokawa K."/>
            <person name="Bajic V.B."/>
            <person name="Brenner S.E."/>
            <person name="Batalov S."/>
            <person name="Forrest A.R."/>
            <person name="Zavolan M."/>
            <person name="Davis M.J."/>
            <person name="Wilming L.G."/>
            <person name="Aidinis V."/>
            <person name="Allen J.E."/>
            <person name="Ambesi-Impiombato A."/>
            <person name="Apweiler R."/>
            <person name="Aturaliya R.N."/>
            <person name="Bailey T.L."/>
            <person name="Bansal M."/>
            <person name="Baxter L."/>
            <person name="Beisel K.W."/>
            <person name="Bersano T."/>
            <person name="Bono H."/>
            <person name="Chalk A.M."/>
            <person name="Chiu K.P."/>
            <person name="Choudhary V."/>
            <person name="Christoffels A."/>
            <person name="Clutterbuck D.R."/>
            <person name="Crowe M.L."/>
            <person name="Dalla E."/>
            <person name="Dalrymple B.P."/>
            <person name="de Bono B."/>
            <person name="Della Gatta G."/>
            <person name="di Bernardo D."/>
            <person name="Down T."/>
            <person name="Engstrom P."/>
            <person name="Fagiolini M."/>
            <person name="Faulkner G."/>
            <person name="Fletcher C.F."/>
            <person name="Fukushima T."/>
            <person name="Furuno M."/>
            <person name="Futaki S."/>
            <person name="Gariboldi M."/>
            <person name="Georgii-Hemming P."/>
            <person name="Gingeras T.R."/>
            <person name="Gojobori T."/>
            <person name="Green R.E."/>
            <person name="Gustincich S."/>
            <person name="Harbers M."/>
            <person name="Hayashi Y."/>
            <person name="Hensch T.K."/>
            <person name="Hirokawa N."/>
            <person name="Hill D."/>
            <person name="Huminiecki L."/>
            <person name="Iacono M."/>
            <person name="Ikeo K."/>
            <person name="Iwama A."/>
            <person name="Ishikawa T."/>
            <person name="Jakt M."/>
            <person name="Kanapin A."/>
            <person name="Katoh M."/>
            <person name="Kawasawa Y."/>
            <person name="Kelso J."/>
            <person name="Kitamura H."/>
            <person name="Kitano H."/>
            <person name="Kollias G."/>
            <person name="Krishnan S.P."/>
            <person name="Kruger A."/>
            <person name="Kummerfeld S.K."/>
            <person name="Kurochkin I.V."/>
            <person name="Lareau L.F."/>
            <person name="Lazarevic D."/>
            <person name="Lipovich L."/>
            <person name="Liu J."/>
            <person name="Liuni S."/>
            <person name="McWilliam S."/>
            <person name="Madan Babu M."/>
            <person name="Madera M."/>
            <person name="Marchionni L."/>
            <person name="Matsuda H."/>
            <person name="Matsuzawa S."/>
            <person name="Miki H."/>
            <person name="Mignone F."/>
            <person name="Miyake S."/>
            <person name="Morris K."/>
            <person name="Mottagui-Tabar S."/>
            <person name="Mulder N."/>
            <person name="Nakano N."/>
            <person name="Nakauchi H."/>
            <person name="Ng P."/>
            <person name="Nilsson R."/>
            <person name="Nishiguchi S."/>
            <person name="Nishikawa S."/>
            <person name="Nori F."/>
            <person name="Ohara O."/>
            <person name="Okazaki Y."/>
            <person name="Orlando V."/>
            <person name="Pang K.C."/>
            <person name="Pavan W.J."/>
            <person name="Pavesi G."/>
            <person name="Pesole G."/>
            <person name="Petrovsky N."/>
            <person name="Piazza S."/>
            <person name="Reed J."/>
            <person name="Reid J.F."/>
            <person name="Ring B.Z."/>
            <person name="Ringwald M."/>
            <person name="Rost B."/>
            <person name="Ruan Y."/>
            <person name="Salzberg S.L."/>
            <person name="Sandelin A."/>
            <person name="Schneider C."/>
            <person name="Schoenbach C."/>
            <person name="Sekiguchi K."/>
            <person name="Semple C.A."/>
            <person name="Seno S."/>
            <person name="Sessa L."/>
            <person name="Sheng Y."/>
            <person name="Shibata Y."/>
            <person name="Shimada H."/>
            <person name="Shimada K."/>
            <person name="Silva D."/>
            <person name="Sinclair B."/>
            <person name="Sperling S."/>
            <person name="Stupka E."/>
            <person name="Sugiura K."/>
            <person name="Sultana R."/>
            <person name="Takenaka Y."/>
            <person name="Taki K."/>
            <person name="Tammoja K."/>
            <person name="Tan S.L."/>
            <person name="Tang S."/>
            <person name="Taylor M.S."/>
            <person name="Tegner J."/>
            <person name="Teichmann S.A."/>
            <person name="Ueda H.R."/>
            <person name="van Nimwegen E."/>
            <person name="Verardo R."/>
            <person name="Wei C.L."/>
            <person name="Yagi K."/>
            <person name="Yamanishi H."/>
            <person name="Zabarovsky E."/>
            <person name="Zhu S."/>
            <person name="Zimmer A."/>
            <person name="Hide W."/>
            <person name="Bult C."/>
            <person name="Grimmond S.M."/>
            <person name="Teasdale R.D."/>
            <person name="Liu E.T."/>
            <person name="Brusic V."/>
            <person name="Quackenbush J."/>
            <person name="Wahlestedt C."/>
            <person name="Mattick J.S."/>
            <person name="Hume D.A."/>
            <person name="Kai C."/>
            <person name="Sasaki D."/>
            <person name="Tomaru Y."/>
            <person name="Fukuda S."/>
            <person name="Kanamori-Katayama M."/>
            <person name="Suzuki M."/>
            <person name="Aoki J."/>
            <person name="Arakawa T."/>
            <person name="Iida J."/>
            <person name="Imamura K."/>
            <person name="Itoh M."/>
            <person name="Kato T."/>
            <person name="Kawaji H."/>
            <person name="Kawagashira N."/>
            <person name="Kawashima T."/>
            <person name="Kojima M."/>
            <person name="Kondo S."/>
            <person name="Konno H."/>
            <person name="Nakano K."/>
            <person name="Ninomiya N."/>
            <person name="Nishio T."/>
            <person name="Okada M."/>
            <person name="Plessy C."/>
            <person name="Shibata K."/>
            <person name="Shiraki T."/>
            <person name="Suzuki S."/>
            <person name="Tagami M."/>
            <person name="Waki K."/>
            <person name="Watahiki A."/>
            <person name="Okamura-Oho Y."/>
            <person name="Suzuki H."/>
            <person name="Kawai J."/>
            <person name="Hayashizaki Y."/>
        </authorList>
    </citation>
    <scope>NUCLEOTIDE SEQUENCE [LARGE SCALE MRNA]</scope>
    <source>
        <strain>C57BL/6J</strain>
        <tissue>Bone marrow</tissue>
        <tissue>Tongue</tissue>
    </source>
</reference>
<reference key="4">
    <citation type="journal article" date="2009" name="PLoS Biol.">
        <title>Lineage-specific biology revealed by a finished genome assembly of the mouse.</title>
        <authorList>
            <person name="Church D.M."/>
            <person name="Goodstadt L."/>
            <person name="Hillier L.W."/>
            <person name="Zody M.C."/>
            <person name="Goldstein S."/>
            <person name="She X."/>
            <person name="Bult C.J."/>
            <person name="Agarwala R."/>
            <person name="Cherry J.L."/>
            <person name="DiCuccio M."/>
            <person name="Hlavina W."/>
            <person name="Kapustin Y."/>
            <person name="Meric P."/>
            <person name="Maglott D."/>
            <person name="Birtle Z."/>
            <person name="Marques A.C."/>
            <person name="Graves T."/>
            <person name="Zhou S."/>
            <person name="Teague B."/>
            <person name="Potamousis K."/>
            <person name="Churas C."/>
            <person name="Place M."/>
            <person name="Herschleb J."/>
            <person name="Runnheim R."/>
            <person name="Forrest D."/>
            <person name="Amos-Landgraf J."/>
            <person name="Schwartz D.C."/>
            <person name="Cheng Z."/>
            <person name="Lindblad-Toh K."/>
            <person name="Eichler E.E."/>
            <person name="Ponting C.P."/>
        </authorList>
    </citation>
    <scope>NUCLEOTIDE SEQUENCE [LARGE SCALE GENOMIC DNA]</scope>
    <source>
        <strain>C57BL/6J</strain>
    </source>
</reference>
<reference key="5">
    <citation type="submission" date="2005-09" db="EMBL/GenBank/DDBJ databases">
        <authorList>
            <person name="Mural R.J."/>
            <person name="Adams M.D."/>
            <person name="Myers E.W."/>
            <person name="Smith H.O."/>
            <person name="Venter J.C."/>
        </authorList>
    </citation>
    <scope>NUCLEOTIDE SEQUENCE [LARGE SCALE GENOMIC DNA]</scope>
</reference>
<reference key="6">
    <citation type="journal article" date="2004" name="Genome Res.">
        <title>The status, quality, and expansion of the NIH full-length cDNA project: the Mammalian Gene Collection (MGC).</title>
        <authorList>
            <consortium name="The MGC Project Team"/>
        </authorList>
    </citation>
    <scope>NUCLEOTIDE SEQUENCE [LARGE SCALE MRNA]</scope>
    <source>
        <tissue>Brain</tissue>
    </source>
</reference>
<reference key="7">
    <citation type="journal article" date="1997" name="Biochem. Biophys. Res. Commun.">
        <title>Identification of a mouse homolog for the human hereditary haemochromatosis candidate gene.</title>
        <authorList>
            <person name="Hashimoto K."/>
            <person name="Hirai M."/>
            <person name="Kurosawa Y."/>
        </authorList>
    </citation>
    <scope>NUCLEOTIDE SEQUENCE [GENOMIC DNA] OF 37-211</scope>
    <source>
        <strain>BALB/cJ</strain>
        <tissue>Liver</tissue>
    </source>
</reference>
<reference key="8">
    <citation type="submission" date="1997-05" db="EMBL/GenBank/DDBJ databases">
        <authorList>
            <person name="Albig W."/>
            <person name="Drabent B."/>
            <person name="Doenecke D."/>
        </authorList>
    </citation>
    <scope>NUCLEOTIDE SEQUENCE [GENOMIC DNA] OF 79-359</scope>
    <source>
        <strain>129</strain>
    </source>
</reference>
<reference key="9">
    <citation type="journal article" date="2010" name="Cell">
        <title>A tissue-specific atlas of mouse protein phosphorylation and expression.</title>
        <authorList>
            <person name="Huttlin E.L."/>
            <person name="Jedrychowski M.P."/>
            <person name="Elias J.E."/>
            <person name="Goswami T."/>
            <person name="Rad R."/>
            <person name="Beausoleil S.A."/>
            <person name="Villen J."/>
            <person name="Haas W."/>
            <person name="Sowa M.E."/>
            <person name="Gygi S.P."/>
        </authorList>
    </citation>
    <scope>IDENTIFICATION BY MASS SPECTROMETRY [LARGE SCALE ANALYSIS]</scope>
    <source>
        <tissue>Lung</tissue>
    </source>
</reference>
<sequence>MSLSAGLPVRPLLLLLLLLWSVAPQALPPRSHSLRYLFMGASEPDLGLPLFEARGYVDDQLFVSYNHESRRAEPRAPWILEQTSSQLWLHLSQSLKGWDYMFIVDFWTIMGNYNHSKVTKLGVVSESHILQVVLGCEVHEDNSTSGFWRYGYDGQDHLEFCPKTLNWSAAEPGAWATKVEWDEHKIRAKQNRDYLEKDCPEQLKRLLELGRGVLGQQVPTLVKVTRHWASTGTSLRCQALDFFPQNITMRWLKDNQPLDAKDVNPEKVLPNGDETYQGWLTLAVAPGDETRFTCQVEHPGLDQPLTASWEPLQSQAMIIGIISGVTVCAIFLVGILFLILRKRKASGGTMGGYVLTDCE</sequence>
<proteinExistence type="evidence at protein level"/>